<sequence>MHSFKRSLLLLGALLPAVFGAPVEPRRAAEKVPGKYIVTFKSGLNVDQIDAHTSWASNVHKRNLERRGLAERDQYSGIEKNYKINKFAAYSGSFDDATIEEIRNSADVAHVEEDQIWYIDALTSQSGAPWGLGAISHKGEASTTYVYDTSAGEGTYAYVVDTGINADHEEFGGRASLAYNAVGGQHVDSVGHGTHVAGTIGGETYGVSKKANLLSVKVFQGESSSTSIILDGFNWAANDIVSKGRTGKSAINMSLGGGYSYAFNQAVEDAYDEGVLSVVAAGNDNIDASDSSPASAPNALTVAASTKSNTRASFSNYGSVVDIFAPGQDILSAWIGSTTATNTISGTSMATPHVVGLSLYLIALEGLSSASAVVSRIKELATQGVLSNVQGSPNLLAYNGADE</sequence>
<dbReference type="EC" id="3.4.21.63"/>
<dbReference type="EMBL" id="L31778">
    <property type="protein sequence ID" value="AAA67705.1"/>
    <property type="molecule type" value="Genomic_DNA"/>
</dbReference>
<dbReference type="EMBL" id="AACD01000095">
    <property type="protein sequence ID" value="EAA62263.1"/>
    <property type="molecule type" value="Genomic_DNA"/>
</dbReference>
<dbReference type="EMBL" id="BN001305">
    <property type="protein sequence ID" value="CBF81670.1"/>
    <property type="molecule type" value="Genomic_DNA"/>
</dbReference>
<dbReference type="RefSeq" id="XP_663162.1">
    <property type="nucleotide sequence ID" value="XM_658070.1"/>
</dbReference>
<dbReference type="SMR" id="Q00208"/>
<dbReference type="STRING" id="227321.Q00208"/>
<dbReference type="MEROPS" id="S08.053"/>
<dbReference type="GlyCosmos" id="Q00208">
    <property type="glycosylation" value="1 site, No reported glycans"/>
</dbReference>
<dbReference type="EnsemblFungi" id="CBF81670">
    <property type="protein sequence ID" value="CBF81670"/>
    <property type="gene ID" value="ANIA_05558"/>
</dbReference>
<dbReference type="KEGG" id="ani:ANIA_05558"/>
<dbReference type="eggNOG" id="KOG1153">
    <property type="taxonomic scope" value="Eukaryota"/>
</dbReference>
<dbReference type="HOGENOM" id="CLU_011263_1_4_1"/>
<dbReference type="InParanoid" id="Q00208"/>
<dbReference type="OMA" id="KYGFHGY"/>
<dbReference type="OrthoDB" id="206201at2759"/>
<dbReference type="Proteomes" id="UP000000560">
    <property type="component" value="Chromosome V"/>
</dbReference>
<dbReference type="GO" id="GO:0005576">
    <property type="term" value="C:extracellular region"/>
    <property type="evidence" value="ECO:0000315"/>
    <property type="project" value="UniProtKB"/>
</dbReference>
<dbReference type="GO" id="GO:0005615">
    <property type="term" value="C:extracellular space"/>
    <property type="evidence" value="ECO:0000318"/>
    <property type="project" value="GO_Central"/>
</dbReference>
<dbReference type="GO" id="GO:0008233">
    <property type="term" value="F:peptidase activity"/>
    <property type="evidence" value="ECO:0000315"/>
    <property type="project" value="UniProtKB"/>
</dbReference>
<dbReference type="GO" id="GO:0004252">
    <property type="term" value="F:serine-type endopeptidase activity"/>
    <property type="evidence" value="ECO:0000318"/>
    <property type="project" value="GO_Central"/>
</dbReference>
<dbReference type="GO" id="GO:0006508">
    <property type="term" value="P:proteolysis"/>
    <property type="evidence" value="ECO:0007669"/>
    <property type="project" value="UniProtKB-KW"/>
</dbReference>
<dbReference type="CDD" id="cd04077">
    <property type="entry name" value="Peptidases_S8_PCSK9_ProteinaseK_like"/>
    <property type="match status" value="1"/>
</dbReference>
<dbReference type="FunFam" id="3.30.70.80:FF:000008">
    <property type="entry name" value="Alkaline protease 1"/>
    <property type="match status" value="1"/>
</dbReference>
<dbReference type="FunFam" id="3.40.50.200:FF:000014">
    <property type="entry name" value="Proteinase K"/>
    <property type="match status" value="1"/>
</dbReference>
<dbReference type="Gene3D" id="3.30.70.80">
    <property type="entry name" value="Peptidase S8 propeptide/proteinase inhibitor I9"/>
    <property type="match status" value="1"/>
</dbReference>
<dbReference type="Gene3D" id="3.40.50.200">
    <property type="entry name" value="Peptidase S8/S53 domain"/>
    <property type="match status" value="1"/>
</dbReference>
<dbReference type="InterPro" id="IPR034193">
    <property type="entry name" value="PCSK9_ProteinaseK-like"/>
</dbReference>
<dbReference type="InterPro" id="IPR000209">
    <property type="entry name" value="Peptidase_S8/S53_dom"/>
</dbReference>
<dbReference type="InterPro" id="IPR036852">
    <property type="entry name" value="Peptidase_S8/S53_dom_sf"/>
</dbReference>
<dbReference type="InterPro" id="IPR023827">
    <property type="entry name" value="Peptidase_S8_Asp-AS"/>
</dbReference>
<dbReference type="InterPro" id="IPR022398">
    <property type="entry name" value="Peptidase_S8_His-AS"/>
</dbReference>
<dbReference type="InterPro" id="IPR023828">
    <property type="entry name" value="Peptidase_S8_Ser-AS"/>
</dbReference>
<dbReference type="InterPro" id="IPR050131">
    <property type="entry name" value="Peptidase_S8_subtilisin-like"/>
</dbReference>
<dbReference type="InterPro" id="IPR015500">
    <property type="entry name" value="Peptidase_S8_subtilisin-rel"/>
</dbReference>
<dbReference type="InterPro" id="IPR010259">
    <property type="entry name" value="S8pro/Inhibitor_I9"/>
</dbReference>
<dbReference type="InterPro" id="IPR037045">
    <property type="entry name" value="S8pro/Inhibitor_I9_sf"/>
</dbReference>
<dbReference type="PANTHER" id="PTHR43806:SF58">
    <property type="entry name" value="ALKALINE PROTEASE 1-RELATED"/>
    <property type="match status" value="1"/>
</dbReference>
<dbReference type="PANTHER" id="PTHR43806">
    <property type="entry name" value="PEPTIDASE S8"/>
    <property type="match status" value="1"/>
</dbReference>
<dbReference type="Pfam" id="PF05922">
    <property type="entry name" value="Inhibitor_I9"/>
    <property type="match status" value="1"/>
</dbReference>
<dbReference type="Pfam" id="PF00082">
    <property type="entry name" value="Peptidase_S8"/>
    <property type="match status" value="1"/>
</dbReference>
<dbReference type="PRINTS" id="PR00723">
    <property type="entry name" value="SUBTILISIN"/>
</dbReference>
<dbReference type="SUPFAM" id="SSF54897">
    <property type="entry name" value="Protease propeptides/inhibitors"/>
    <property type="match status" value="1"/>
</dbReference>
<dbReference type="SUPFAM" id="SSF52743">
    <property type="entry name" value="Subtilisin-like"/>
    <property type="match status" value="1"/>
</dbReference>
<dbReference type="PROSITE" id="PS51892">
    <property type="entry name" value="SUBTILASE"/>
    <property type="match status" value="1"/>
</dbReference>
<dbReference type="PROSITE" id="PS00136">
    <property type="entry name" value="SUBTILASE_ASP"/>
    <property type="match status" value="1"/>
</dbReference>
<dbReference type="PROSITE" id="PS00137">
    <property type="entry name" value="SUBTILASE_HIS"/>
    <property type="match status" value="1"/>
</dbReference>
<dbReference type="PROSITE" id="PS00138">
    <property type="entry name" value="SUBTILASE_SER"/>
    <property type="match status" value="1"/>
</dbReference>
<protein>
    <recommendedName>
        <fullName>Alkaline protease 1</fullName>
        <shortName>ALP</shortName>
        <ecNumber>3.4.21.63</ecNumber>
    </recommendedName>
    <alternativeName>
        <fullName>Aspergillopeptidase B</fullName>
    </alternativeName>
    <alternativeName>
        <fullName>Aspergillus proteinase B</fullName>
    </alternativeName>
    <alternativeName>
        <fullName>Elastase</fullName>
    </alternativeName>
    <alternativeName>
        <fullName>Elastinolytic serine proteinase</fullName>
    </alternativeName>
    <alternativeName>
        <fullName>Oryzin</fullName>
    </alternativeName>
</protein>
<organism>
    <name type="scientific">Emericella nidulans (strain FGSC A4 / ATCC 38163 / CBS 112.46 / NRRL 194 / M139)</name>
    <name type="common">Aspergillus nidulans</name>
    <dbReference type="NCBI Taxonomy" id="227321"/>
    <lineage>
        <taxon>Eukaryota</taxon>
        <taxon>Fungi</taxon>
        <taxon>Dikarya</taxon>
        <taxon>Ascomycota</taxon>
        <taxon>Pezizomycotina</taxon>
        <taxon>Eurotiomycetes</taxon>
        <taxon>Eurotiomycetidae</taxon>
        <taxon>Eurotiales</taxon>
        <taxon>Aspergillaceae</taxon>
        <taxon>Aspergillus</taxon>
        <taxon>Aspergillus subgen. Nidulantes</taxon>
    </lineage>
</organism>
<reference key="1">
    <citation type="journal article" date="1994" name="Gene">
        <title>Isolation and characterization of an Aspergillus nidulans gene encoding an alkaline protease.</title>
        <authorList>
            <person name="Katz M.E."/>
            <person name="Rice R.N."/>
            <person name="Cheetham B.F."/>
        </authorList>
    </citation>
    <scope>NUCLEOTIDE SEQUENCE [GENOMIC DNA]</scope>
    <scope>INDUCTION</scope>
    <source>
        <strain>MH2</strain>
        <tissue>Mycelium</tissue>
    </source>
</reference>
<reference key="2">
    <citation type="journal article" date="2005" name="Nature">
        <title>Sequencing of Aspergillus nidulans and comparative analysis with A. fumigatus and A. oryzae.</title>
        <authorList>
            <person name="Galagan J.E."/>
            <person name="Calvo S.E."/>
            <person name="Cuomo C."/>
            <person name="Ma L.-J."/>
            <person name="Wortman J.R."/>
            <person name="Batzoglou S."/>
            <person name="Lee S.-I."/>
            <person name="Bastuerkmen M."/>
            <person name="Spevak C.C."/>
            <person name="Clutterbuck J."/>
            <person name="Kapitonov V."/>
            <person name="Jurka J."/>
            <person name="Scazzocchio C."/>
            <person name="Farman M.L."/>
            <person name="Butler J."/>
            <person name="Purcell S."/>
            <person name="Harris S."/>
            <person name="Braus G.H."/>
            <person name="Draht O."/>
            <person name="Busch S."/>
            <person name="D'Enfert C."/>
            <person name="Bouchier C."/>
            <person name="Goldman G.H."/>
            <person name="Bell-Pedersen D."/>
            <person name="Griffiths-Jones S."/>
            <person name="Doonan J.H."/>
            <person name="Yu J."/>
            <person name="Vienken K."/>
            <person name="Pain A."/>
            <person name="Freitag M."/>
            <person name="Selker E.U."/>
            <person name="Archer D.B."/>
            <person name="Penalva M.A."/>
            <person name="Oakley B.R."/>
            <person name="Momany M."/>
            <person name="Tanaka T."/>
            <person name="Kumagai T."/>
            <person name="Asai K."/>
            <person name="Machida M."/>
            <person name="Nierman W.C."/>
            <person name="Denning D.W."/>
            <person name="Caddick M.X."/>
            <person name="Hynes M."/>
            <person name="Paoletti M."/>
            <person name="Fischer R."/>
            <person name="Miller B.L."/>
            <person name="Dyer P.S."/>
            <person name="Sachs M.S."/>
            <person name="Osmani S.A."/>
            <person name="Birren B.W."/>
        </authorList>
    </citation>
    <scope>NUCLEOTIDE SEQUENCE [LARGE SCALE GENOMIC DNA]</scope>
    <source>
        <strain>FGSC A4 / ATCC 38163 / CBS 112.46 / NRRL 194 / M139</strain>
    </source>
</reference>
<reference key="3">
    <citation type="journal article" date="2009" name="Fungal Genet. Biol.">
        <title>The 2008 update of the Aspergillus nidulans genome annotation: a community effort.</title>
        <authorList>
            <person name="Wortman J.R."/>
            <person name="Gilsenan J.M."/>
            <person name="Joardar V."/>
            <person name="Deegan J."/>
            <person name="Clutterbuck J."/>
            <person name="Andersen M.R."/>
            <person name="Archer D."/>
            <person name="Bencina M."/>
            <person name="Braus G."/>
            <person name="Coutinho P."/>
            <person name="von Dohren H."/>
            <person name="Doonan J."/>
            <person name="Driessen A.J."/>
            <person name="Durek P."/>
            <person name="Espeso E."/>
            <person name="Fekete E."/>
            <person name="Flipphi M."/>
            <person name="Estrada C.G."/>
            <person name="Geysens S."/>
            <person name="Goldman G."/>
            <person name="de Groot P.W."/>
            <person name="Hansen K."/>
            <person name="Harris S.D."/>
            <person name="Heinekamp T."/>
            <person name="Helmstaedt K."/>
            <person name="Henrissat B."/>
            <person name="Hofmann G."/>
            <person name="Homan T."/>
            <person name="Horio T."/>
            <person name="Horiuchi H."/>
            <person name="James S."/>
            <person name="Jones M."/>
            <person name="Karaffa L."/>
            <person name="Karanyi Z."/>
            <person name="Kato M."/>
            <person name="Keller N."/>
            <person name="Kelly D.E."/>
            <person name="Kiel J.A."/>
            <person name="Kim J.M."/>
            <person name="van der Klei I.J."/>
            <person name="Klis F.M."/>
            <person name="Kovalchuk A."/>
            <person name="Krasevec N."/>
            <person name="Kubicek C.P."/>
            <person name="Liu B."/>
            <person name="Maccabe A."/>
            <person name="Meyer V."/>
            <person name="Mirabito P."/>
            <person name="Miskei M."/>
            <person name="Mos M."/>
            <person name="Mullins J."/>
            <person name="Nelson D.R."/>
            <person name="Nielsen J."/>
            <person name="Oakley B.R."/>
            <person name="Osmani S.A."/>
            <person name="Pakula T."/>
            <person name="Paszewski A."/>
            <person name="Paulsen I."/>
            <person name="Pilsyk S."/>
            <person name="Pocsi I."/>
            <person name="Punt P.J."/>
            <person name="Ram A.F."/>
            <person name="Ren Q."/>
            <person name="Robellet X."/>
            <person name="Robson G."/>
            <person name="Seiboth B."/>
            <person name="van Solingen P."/>
            <person name="Specht T."/>
            <person name="Sun J."/>
            <person name="Taheri-Talesh N."/>
            <person name="Takeshita N."/>
            <person name="Ussery D."/>
            <person name="vanKuyk P.A."/>
            <person name="Visser H."/>
            <person name="van de Vondervoort P.J."/>
            <person name="de Vries R.P."/>
            <person name="Walton J."/>
            <person name="Xiang X."/>
            <person name="Xiong Y."/>
            <person name="Zeng A.P."/>
            <person name="Brandt B.W."/>
            <person name="Cornell M.J."/>
            <person name="van den Hondel C.A."/>
            <person name="Visser J."/>
            <person name="Oliver S.G."/>
            <person name="Turner G."/>
        </authorList>
    </citation>
    <scope>GENOME REANNOTATION</scope>
    <source>
        <strain>FGSC A4 / ATCC 38163 / CBS 112.46 / NRRL 194 / M139</strain>
    </source>
</reference>
<reference key="4">
    <citation type="journal article" date="1973" name="J. Gen. Microbiol.">
        <title>Regulation of intracellular and extracellular neutral and alkaline proteases in Aspergillus nidulans.</title>
        <authorList>
            <person name="Cohen B.L."/>
        </authorList>
    </citation>
    <scope>INDUCTION</scope>
</reference>
<reference key="5">
    <citation type="journal article" date="2000" name="Fungal Genet. Biol.">
        <title>Analysis of two Aspergillus nidulans genes encoding extracellular proteases.</title>
        <authorList>
            <person name="vanKuyk P.A."/>
            <person name="Cheetham B.F."/>
            <person name="Katz M.E."/>
        </authorList>
    </citation>
    <scope>FUNCTION</scope>
</reference>
<reference key="6">
    <citation type="journal article" date="2014" name="BMC Genomics">
        <title>Elucidating how the saprophytic fungus Aspergillus nidulans uses the plant polyester suberin as carbon source.</title>
        <authorList>
            <person name="Martins I."/>
            <person name="Hartmann D.O."/>
            <person name="Alves P.C."/>
            <person name="Martins C."/>
            <person name="Garcia H."/>
            <person name="Leclercq C.C."/>
            <person name="Ferreira R."/>
            <person name="He J."/>
            <person name="Renaut J."/>
            <person name="Becker J.D."/>
            <person name="Silva Pereira C."/>
        </authorList>
    </citation>
    <scope>SUBCELLULAR LOCATION</scope>
</reference>
<gene>
    <name type="primary">alp1</name>
    <name type="synonym">alk1</name>
    <name type="synonym">alp</name>
    <name type="synonym">prtA</name>
    <name type="ORF">AN5558</name>
</gene>
<name>ORYZ_EMENI</name>
<comment type="function">
    <text evidence="4">Secreted alkaline protease that allows assimilation of proteinaceous substrates.</text>
</comment>
<comment type="catalytic activity">
    <reaction>
        <text>Hydrolysis of proteins with broad specificity, and of Bz-Arg-OEt &gt; Ac-Tyr-OEt. Does not hydrolyze peptide amides.</text>
        <dbReference type="EC" id="3.4.21.63"/>
    </reaction>
</comment>
<comment type="subcellular location">
    <subcellularLocation>
        <location evidence="5">Secreted</location>
    </subcellularLocation>
</comment>
<comment type="induction">
    <text evidence="6 7">Highly expressed on medium lacking a nitrogen, carbon or sulfur source.</text>
</comment>
<comment type="similarity">
    <text evidence="8">Belongs to the peptidase S8 family.</text>
</comment>
<evidence type="ECO:0000250" key="1"/>
<evidence type="ECO:0000255" key="2"/>
<evidence type="ECO:0000255" key="3">
    <source>
        <dbReference type="PROSITE-ProRule" id="PRU01240"/>
    </source>
</evidence>
<evidence type="ECO:0000269" key="4">
    <source>
    </source>
</evidence>
<evidence type="ECO:0000269" key="5">
    <source>
    </source>
</evidence>
<evidence type="ECO:0000269" key="6">
    <source>
    </source>
</evidence>
<evidence type="ECO:0000269" key="7">
    <source>
    </source>
</evidence>
<evidence type="ECO:0000305" key="8"/>
<accession>Q00208</accession>
<accession>C8VG51</accession>
<accession>Q5B1M2</accession>
<feature type="signal peptide" evidence="2">
    <location>
        <begin position="1"/>
        <end position="21"/>
    </location>
</feature>
<feature type="propeptide" id="PRO_0000406998" evidence="1">
    <location>
        <begin position="22"/>
        <end position="124"/>
    </location>
</feature>
<feature type="chain" id="PRO_0000406999" description="Alkaline protease 1">
    <location>
        <begin position="125"/>
        <end position="403"/>
    </location>
</feature>
<feature type="domain" description="Inhibitor I9" evidence="2">
    <location>
        <begin position="35"/>
        <end position="119"/>
    </location>
</feature>
<feature type="domain" description="Peptidase S8" evidence="3">
    <location>
        <begin position="129"/>
        <end position="403"/>
    </location>
</feature>
<feature type="active site" description="Charge relay system" evidence="3">
    <location>
        <position position="161"/>
    </location>
</feature>
<feature type="active site" description="Charge relay system" evidence="3">
    <location>
        <position position="192"/>
    </location>
</feature>
<feature type="active site" description="Charge relay system" evidence="3">
    <location>
        <position position="348"/>
    </location>
</feature>
<feature type="glycosylation site" description="N-linked (GlcNAc...) asparagine" evidence="2">
    <location>
        <position position="252"/>
    </location>
</feature>
<proteinExistence type="evidence at transcript level"/>
<keyword id="KW-0325">Glycoprotein</keyword>
<keyword id="KW-0378">Hydrolase</keyword>
<keyword id="KW-0645">Protease</keyword>
<keyword id="KW-1185">Reference proteome</keyword>
<keyword id="KW-0964">Secreted</keyword>
<keyword id="KW-0720">Serine protease</keyword>
<keyword id="KW-0732">Signal</keyword>
<keyword id="KW-0865">Zymogen</keyword>